<accession>C1CDV6</accession>
<proteinExistence type="inferred from homology"/>
<sequence>MARVKGGVVSRKRRKRILKLAKGYYGAKHILFRTAKEQVMNSYYYAYRDRRQKKRDFRKLWITRINAAARMNGLSYSQLMHGLKLAEIEVNRKMLADLAVNDAVAFTALADAAKAKLGK</sequence>
<feature type="chain" id="PRO_1000193981" description="Large ribosomal subunit protein bL20">
    <location>
        <begin position="1"/>
        <end position="119"/>
    </location>
</feature>
<gene>
    <name evidence="1" type="primary">rplT</name>
    <name type="ordered locus">SPJ_0902</name>
</gene>
<keyword id="KW-0687">Ribonucleoprotein</keyword>
<keyword id="KW-0689">Ribosomal protein</keyword>
<keyword id="KW-0694">RNA-binding</keyword>
<keyword id="KW-0699">rRNA-binding</keyword>
<organism>
    <name type="scientific">Streptococcus pneumoniae (strain JJA)</name>
    <dbReference type="NCBI Taxonomy" id="488222"/>
    <lineage>
        <taxon>Bacteria</taxon>
        <taxon>Bacillati</taxon>
        <taxon>Bacillota</taxon>
        <taxon>Bacilli</taxon>
        <taxon>Lactobacillales</taxon>
        <taxon>Streptococcaceae</taxon>
        <taxon>Streptococcus</taxon>
    </lineage>
</organism>
<protein>
    <recommendedName>
        <fullName evidence="1">Large ribosomal subunit protein bL20</fullName>
    </recommendedName>
    <alternativeName>
        <fullName evidence="2">50S ribosomal protein L20</fullName>
    </alternativeName>
</protein>
<comment type="function">
    <text evidence="1">Binds directly to 23S ribosomal RNA and is necessary for the in vitro assembly process of the 50S ribosomal subunit. It is not involved in the protein synthesizing functions of that subunit.</text>
</comment>
<comment type="similarity">
    <text evidence="1">Belongs to the bacterial ribosomal protein bL20 family.</text>
</comment>
<evidence type="ECO:0000255" key="1">
    <source>
        <dbReference type="HAMAP-Rule" id="MF_00382"/>
    </source>
</evidence>
<evidence type="ECO:0000305" key="2"/>
<dbReference type="EMBL" id="CP000919">
    <property type="protein sequence ID" value="ACO19448.1"/>
    <property type="molecule type" value="Genomic_DNA"/>
</dbReference>
<dbReference type="RefSeq" id="WP_000124836.1">
    <property type="nucleotide sequence ID" value="NC_012466.1"/>
</dbReference>
<dbReference type="SMR" id="C1CDV6"/>
<dbReference type="GeneID" id="45653697"/>
<dbReference type="KEGG" id="sjj:SPJ_0902"/>
<dbReference type="HOGENOM" id="CLU_123265_0_1_9"/>
<dbReference type="Proteomes" id="UP000002206">
    <property type="component" value="Chromosome"/>
</dbReference>
<dbReference type="GO" id="GO:1990904">
    <property type="term" value="C:ribonucleoprotein complex"/>
    <property type="evidence" value="ECO:0007669"/>
    <property type="project" value="UniProtKB-KW"/>
</dbReference>
<dbReference type="GO" id="GO:0005840">
    <property type="term" value="C:ribosome"/>
    <property type="evidence" value="ECO:0007669"/>
    <property type="project" value="UniProtKB-KW"/>
</dbReference>
<dbReference type="GO" id="GO:0019843">
    <property type="term" value="F:rRNA binding"/>
    <property type="evidence" value="ECO:0007669"/>
    <property type="project" value="UniProtKB-UniRule"/>
</dbReference>
<dbReference type="GO" id="GO:0003735">
    <property type="term" value="F:structural constituent of ribosome"/>
    <property type="evidence" value="ECO:0007669"/>
    <property type="project" value="InterPro"/>
</dbReference>
<dbReference type="GO" id="GO:0000027">
    <property type="term" value="P:ribosomal large subunit assembly"/>
    <property type="evidence" value="ECO:0007669"/>
    <property type="project" value="UniProtKB-UniRule"/>
</dbReference>
<dbReference type="GO" id="GO:0006412">
    <property type="term" value="P:translation"/>
    <property type="evidence" value="ECO:0007669"/>
    <property type="project" value="InterPro"/>
</dbReference>
<dbReference type="CDD" id="cd07026">
    <property type="entry name" value="Ribosomal_L20"/>
    <property type="match status" value="1"/>
</dbReference>
<dbReference type="FunFam" id="1.10.1900.20:FF:000001">
    <property type="entry name" value="50S ribosomal protein L20"/>
    <property type="match status" value="1"/>
</dbReference>
<dbReference type="Gene3D" id="6.10.160.10">
    <property type="match status" value="1"/>
</dbReference>
<dbReference type="Gene3D" id="1.10.1900.20">
    <property type="entry name" value="Ribosomal protein L20"/>
    <property type="match status" value="1"/>
</dbReference>
<dbReference type="HAMAP" id="MF_00382">
    <property type="entry name" value="Ribosomal_bL20"/>
    <property type="match status" value="1"/>
</dbReference>
<dbReference type="InterPro" id="IPR005813">
    <property type="entry name" value="Ribosomal_bL20"/>
</dbReference>
<dbReference type="InterPro" id="IPR049946">
    <property type="entry name" value="RIBOSOMAL_L20_CS"/>
</dbReference>
<dbReference type="InterPro" id="IPR035566">
    <property type="entry name" value="Ribosomal_protein_bL20_C"/>
</dbReference>
<dbReference type="NCBIfam" id="TIGR01032">
    <property type="entry name" value="rplT_bact"/>
    <property type="match status" value="1"/>
</dbReference>
<dbReference type="PANTHER" id="PTHR10986">
    <property type="entry name" value="39S RIBOSOMAL PROTEIN L20"/>
    <property type="match status" value="1"/>
</dbReference>
<dbReference type="Pfam" id="PF00453">
    <property type="entry name" value="Ribosomal_L20"/>
    <property type="match status" value="1"/>
</dbReference>
<dbReference type="PRINTS" id="PR00062">
    <property type="entry name" value="RIBOSOMALL20"/>
</dbReference>
<dbReference type="SUPFAM" id="SSF74731">
    <property type="entry name" value="Ribosomal protein L20"/>
    <property type="match status" value="1"/>
</dbReference>
<dbReference type="PROSITE" id="PS00937">
    <property type="entry name" value="RIBOSOMAL_L20"/>
    <property type="match status" value="1"/>
</dbReference>
<name>RL20_STRZJ</name>
<reference key="1">
    <citation type="journal article" date="2010" name="Genome Biol.">
        <title>Structure and dynamics of the pan-genome of Streptococcus pneumoniae and closely related species.</title>
        <authorList>
            <person name="Donati C."/>
            <person name="Hiller N.L."/>
            <person name="Tettelin H."/>
            <person name="Muzzi A."/>
            <person name="Croucher N.J."/>
            <person name="Angiuoli S.V."/>
            <person name="Oggioni M."/>
            <person name="Dunning Hotopp J.C."/>
            <person name="Hu F.Z."/>
            <person name="Riley D.R."/>
            <person name="Covacci A."/>
            <person name="Mitchell T.J."/>
            <person name="Bentley S.D."/>
            <person name="Kilian M."/>
            <person name="Ehrlich G.D."/>
            <person name="Rappuoli R."/>
            <person name="Moxon E.R."/>
            <person name="Masignani V."/>
        </authorList>
    </citation>
    <scope>NUCLEOTIDE SEQUENCE [LARGE SCALE GENOMIC DNA]</scope>
    <source>
        <strain>JJA</strain>
    </source>
</reference>